<accession>Q3SYT1</accession>
<keyword id="KW-0963">Cytoplasm</keyword>
<keyword id="KW-0408">Iron</keyword>
<keyword id="KW-0411">Iron-sulfur</keyword>
<keyword id="KW-0479">Metal-binding</keyword>
<keyword id="KW-0539">Nucleus</keyword>
<keyword id="KW-0597">Phosphoprotein</keyword>
<keyword id="KW-1185">Reference proteome</keyword>
<keyword id="KW-0949">S-adenosyl-L-methionine</keyword>
<keyword id="KW-0808">Transferase</keyword>
<evidence type="ECO:0000250" key="1">
    <source>
        <dbReference type="UniProtKB" id="O58832"/>
    </source>
</evidence>
<evidence type="ECO:0000250" key="2">
    <source>
        <dbReference type="UniProtKB" id="P40487"/>
    </source>
</evidence>
<evidence type="ECO:0000250" key="3">
    <source>
        <dbReference type="UniProtKB" id="Q5NCQ5"/>
    </source>
</evidence>
<evidence type="ECO:0000250" key="4">
    <source>
        <dbReference type="UniProtKB" id="Q9BZG8"/>
    </source>
</evidence>
<evidence type="ECO:0000305" key="5"/>
<proteinExistence type="evidence at transcript level"/>
<gene>
    <name type="primary">DPH1</name>
</gene>
<organism>
    <name type="scientific">Bos taurus</name>
    <name type="common">Bovine</name>
    <dbReference type="NCBI Taxonomy" id="9913"/>
    <lineage>
        <taxon>Eukaryota</taxon>
        <taxon>Metazoa</taxon>
        <taxon>Chordata</taxon>
        <taxon>Craniata</taxon>
        <taxon>Vertebrata</taxon>
        <taxon>Euteleostomi</taxon>
        <taxon>Mammalia</taxon>
        <taxon>Eutheria</taxon>
        <taxon>Laurasiatheria</taxon>
        <taxon>Artiodactyla</taxon>
        <taxon>Ruminantia</taxon>
        <taxon>Pecora</taxon>
        <taxon>Bovidae</taxon>
        <taxon>Bovinae</taxon>
        <taxon>Bos</taxon>
    </lineage>
</organism>
<protein>
    <recommendedName>
        <fullName evidence="5">2-(3-amino-3-carboxypropyl)histidine synthase subunit 1</fullName>
        <ecNumber evidence="3">2.5.1.108</ecNumber>
    </recommendedName>
    <alternativeName>
        <fullName>Diphthamide biosynthesis protein 1</fullName>
    </alternativeName>
    <alternativeName>
        <fullName evidence="5">Diphtheria toxin resistance protein 1</fullName>
    </alternativeName>
    <alternativeName>
        <fullName evidence="5">S-adenosyl-L-methionine:L-histidine 3-amino-3-carboxypropyltransferase 1</fullName>
    </alternativeName>
</protein>
<comment type="function">
    <text evidence="2 3">Catalyzes the first step of diphthamide biosynthesis, a post-translational modification of histidine which occurs in elongation factor 2 (By similarity). DPH1 and DPH2 transfer a 3-amino-3-carboxypropyl (ACP) group from S-adenosyl-L-methionine (SAM) to a histidine residue, the reaction is assisted by a reduction system comprising DPH3 and a NADH-dependent reductase (By similarity).</text>
</comment>
<comment type="catalytic activity">
    <reaction evidence="3">
        <text>L-histidyl-[translation elongation factor 2] + S-adenosyl-L-methionine = 2-[(3S)-amino-3-carboxypropyl]-L-histidyl-[translation elongation factor 2] + S-methyl-5'-thioadenosine + H(+)</text>
        <dbReference type="Rhea" id="RHEA:36783"/>
        <dbReference type="Rhea" id="RHEA-COMP:9748"/>
        <dbReference type="Rhea" id="RHEA-COMP:9749"/>
        <dbReference type="ChEBI" id="CHEBI:15378"/>
        <dbReference type="ChEBI" id="CHEBI:17509"/>
        <dbReference type="ChEBI" id="CHEBI:29979"/>
        <dbReference type="ChEBI" id="CHEBI:59789"/>
        <dbReference type="ChEBI" id="CHEBI:73995"/>
        <dbReference type="EC" id="2.5.1.108"/>
    </reaction>
</comment>
<comment type="cofactor">
    <cofactor evidence="2">
        <name>[4Fe-4S] cluster</name>
        <dbReference type="ChEBI" id="CHEBI:49883"/>
    </cofactor>
    <text evidence="2">Binds 1 [4Fe-4S] cluster per subunit. The cluster is coordinated with 3 cysteines and an exchangeable S-adenosyl-L-methionine.</text>
</comment>
<comment type="pathway">
    <text>Protein modification; peptidyl-diphthamide biosynthesis.</text>
</comment>
<comment type="subunit">
    <text evidence="2 3 4">Component of the 2-(3-amino-3-carboxypropyl)histidine synthase complex composed of DPH1, DPH2, DPH3 and a NADH-dependent reductase (By similarity). Interacts with DPH2 and RBM8A.</text>
</comment>
<comment type="subcellular location">
    <subcellularLocation>
        <location evidence="3 4">Nucleus</location>
    </subcellularLocation>
    <subcellularLocation>
        <location evidence="3 4">Cytoplasm</location>
    </subcellularLocation>
    <text evidence="3 4">Punctate, primarily perinuclear localization.</text>
</comment>
<comment type="similarity">
    <text evidence="5">Belongs to the DPH1/DPH2 family. DPH1 subfamily.</text>
</comment>
<feature type="chain" id="PRO_0000307881" description="2-(3-amino-3-carboxypropyl)histidine synthase subunit 1">
    <location>
        <begin position="1"/>
        <end position="438"/>
    </location>
</feature>
<feature type="binding site" evidence="1">
    <location>
        <position position="110"/>
    </location>
    <ligand>
        <name>[4Fe-4S] cluster</name>
        <dbReference type="ChEBI" id="CHEBI:49883"/>
    </ligand>
</feature>
<feature type="binding site" evidence="1">
    <location>
        <position position="214"/>
    </location>
    <ligand>
        <name>[4Fe-4S] cluster</name>
        <dbReference type="ChEBI" id="CHEBI:49883"/>
    </ligand>
</feature>
<feature type="binding site" evidence="1">
    <location>
        <position position="342"/>
    </location>
    <ligand>
        <name>[4Fe-4S] cluster</name>
        <dbReference type="ChEBI" id="CHEBI:49883"/>
    </ligand>
</feature>
<feature type="modified residue" description="Phosphoserine" evidence="3">
    <location>
        <position position="418"/>
    </location>
</feature>
<name>DPH1_BOVIN</name>
<sequence length="438" mass="47978">MAALVAAEAAESCSRNGPGRGRAPRGRLANQIPAEILNNPQLQAAIQVLPSNYNFEVPKTIWRIQQAQAKKVALQMPEGLLLFACTIVDILERFTEAEVMVMGDVTYGACCVDDFTARALGADFLVHYGHSCLVPMDTSAQDFRVLYVFVDIRIDTAHLLDSIRLTFPPASALALVSTIQFVSTLQAAAQELKAEYRVSVPQCKPLSPGEILGCTSPCLPKEVEAVVYLGDGRFHLESVMIANPNISAYRYDPYSKVLSREHYDHQRMQANRQEAIATARSAKSWGLILGTLGRQGSPKILEHLESRLQALGLPFVRLLLSEIFPSKLSLLPEVDVWVQVACPRLSIDWGTAFPKPLLTPYEAAVALRDISWQQPYPMDFYASSSLGPWTVNHGRDRLLQVPGRLALGKVQGGPARPSPAAACEACSCRDEEVSPIAL</sequence>
<reference key="1">
    <citation type="submission" date="2005-08" db="EMBL/GenBank/DDBJ databases">
        <authorList>
            <consortium name="NIH - Mammalian Gene Collection (MGC) project"/>
        </authorList>
    </citation>
    <scope>NUCLEOTIDE SEQUENCE [LARGE SCALE MRNA]</scope>
    <source>
        <strain>Crossbred X Angus</strain>
        <tissue>Ileum</tissue>
    </source>
</reference>
<dbReference type="EC" id="2.5.1.108" evidence="3"/>
<dbReference type="EMBL" id="BC103408">
    <property type="protein sequence ID" value="AAI03409.1"/>
    <property type="molecule type" value="mRNA"/>
</dbReference>
<dbReference type="RefSeq" id="NP_001070367.1">
    <property type="nucleotide sequence ID" value="NM_001076899.2"/>
</dbReference>
<dbReference type="SMR" id="Q3SYT1"/>
<dbReference type="FunCoup" id="Q3SYT1">
    <property type="interactions" value="2367"/>
</dbReference>
<dbReference type="STRING" id="9913.ENSBTAP00000012340"/>
<dbReference type="PaxDb" id="9913-ENSBTAP00000012340"/>
<dbReference type="GeneID" id="534099"/>
<dbReference type="KEGG" id="bta:534099"/>
<dbReference type="CTD" id="1801"/>
<dbReference type="eggNOG" id="KOG2648">
    <property type="taxonomic scope" value="Eukaryota"/>
</dbReference>
<dbReference type="InParanoid" id="Q3SYT1"/>
<dbReference type="OrthoDB" id="1649088at2759"/>
<dbReference type="UniPathway" id="UPA00559"/>
<dbReference type="Proteomes" id="UP000009136">
    <property type="component" value="Unplaced"/>
</dbReference>
<dbReference type="GO" id="GO:0120513">
    <property type="term" value="C:2-(3-amino-3-carboxypropyl)histidine synthase complex"/>
    <property type="evidence" value="ECO:0000250"/>
    <property type="project" value="UniProtKB"/>
</dbReference>
<dbReference type="GO" id="GO:0005737">
    <property type="term" value="C:cytoplasm"/>
    <property type="evidence" value="ECO:0007669"/>
    <property type="project" value="UniProtKB-SubCell"/>
</dbReference>
<dbReference type="GO" id="GO:0005634">
    <property type="term" value="C:nucleus"/>
    <property type="evidence" value="ECO:0007669"/>
    <property type="project" value="UniProtKB-SubCell"/>
</dbReference>
<dbReference type="GO" id="GO:0090560">
    <property type="term" value="F:2-(3-amino-3-carboxypropyl)histidine synthase activity"/>
    <property type="evidence" value="ECO:0007669"/>
    <property type="project" value="UniProtKB-EC"/>
</dbReference>
<dbReference type="GO" id="GO:0051539">
    <property type="term" value="F:4 iron, 4 sulfur cluster binding"/>
    <property type="evidence" value="ECO:0000250"/>
    <property type="project" value="UniProtKB"/>
</dbReference>
<dbReference type="GO" id="GO:0046872">
    <property type="term" value="F:metal ion binding"/>
    <property type="evidence" value="ECO:0007669"/>
    <property type="project" value="UniProtKB-KW"/>
</dbReference>
<dbReference type="GO" id="GO:0017183">
    <property type="term" value="P:protein histidyl modification to diphthamide"/>
    <property type="evidence" value="ECO:0000250"/>
    <property type="project" value="UniProtKB"/>
</dbReference>
<dbReference type="FunFam" id="3.40.50.11840:FF:000001">
    <property type="entry name" value="2-(3-amino-3-carboxypropyl)histidine synthase subunit 1"/>
    <property type="match status" value="1"/>
</dbReference>
<dbReference type="FunFam" id="3.40.50.11850:FF:000001">
    <property type="entry name" value="2-(3-amino-3-carboxypropyl)histidine synthase subunit 1"/>
    <property type="match status" value="1"/>
</dbReference>
<dbReference type="FunFam" id="3.40.50.11860:FF:000002">
    <property type="entry name" value="2-(3-amino-3-carboxypropyl)histidine synthase subunit 1"/>
    <property type="match status" value="1"/>
</dbReference>
<dbReference type="Gene3D" id="3.40.50.11840">
    <property type="entry name" value="Diphthamide synthesis DPH1/DPH2 domain 1"/>
    <property type="match status" value="1"/>
</dbReference>
<dbReference type="Gene3D" id="3.40.50.11850">
    <property type="entry name" value="Diphthamide synthesis DPH1/DPH2 domain 2"/>
    <property type="match status" value="1"/>
</dbReference>
<dbReference type="Gene3D" id="3.40.50.11860">
    <property type="entry name" value="Diphthamide synthesis DPH1/DPH2 domain 3"/>
    <property type="match status" value="1"/>
</dbReference>
<dbReference type="InterPro" id="IPR016435">
    <property type="entry name" value="DPH1/DPH2"/>
</dbReference>
<dbReference type="InterPro" id="IPR042263">
    <property type="entry name" value="DPH1/DPH2_1"/>
</dbReference>
<dbReference type="InterPro" id="IPR042264">
    <property type="entry name" value="DPH1/DPH2_2"/>
</dbReference>
<dbReference type="InterPro" id="IPR042265">
    <property type="entry name" value="DPH1/DPH2_3"/>
</dbReference>
<dbReference type="NCBIfam" id="TIGR00322">
    <property type="entry name" value="diphth2_R"/>
    <property type="match status" value="1"/>
</dbReference>
<dbReference type="PANTHER" id="PTHR10762:SF1">
    <property type="entry name" value="2-(3-AMINO-3-CARBOXYPROPYL)HISTIDINE SYNTHASE SUBUNIT 1"/>
    <property type="match status" value="1"/>
</dbReference>
<dbReference type="PANTHER" id="PTHR10762">
    <property type="entry name" value="DIPHTHAMIDE BIOSYNTHESIS PROTEIN"/>
    <property type="match status" value="1"/>
</dbReference>
<dbReference type="Pfam" id="PF01866">
    <property type="entry name" value="Diphthamide_syn"/>
    <property type="match status" value="1"/>
</dbReference>
<dbReference type="SFLD" id="SFLDS00032">
    <property type="entry name" value="Radical_SAM_3-amino-3-carboxyp"/>
    <property type="match status" value="1"/>
</dbReference>